<dbReference type="EC" id="6.1.1.5" evidence="1"/>
<dbReference type="EMBL" id="CP001048">
    <property type="protein sequence ID" value="ACC87625.1"/>
    <property type="molecule type" value="Genomic_DNA"/>
</dbReference>
<dbReference type="RefSeq" id="WP_002210509.1">
    <property type="nucleotide sequence ID" value="NZ_CP009780.1"/>
</dbReference>
<dbReference type="SMR" id="B2K3M6"/>
<dbReference type="GeneID" id="57974135"/>
<dbReference type="KEGG" id="ypb:YPTS_0641"/>
<dbReference type="PATRIC" id="fig|502801.10.peg.4323"/>
<dbReference type="GO" id="GO:0005829">
    <property type="term" value="C:cytosol"/>
    <property type="evidence" value="ECO:0007669"/>
    <property type="project" value="TreeGrafter"/>
</dbReference>
<dbReference type="GO" id="GO:0002161">
    <property type="term" value="F:aminoacyl-tRNA deacylase activity"/>
    <property type="evidence" value="ECO:0007669"/>
    <property type="project" value="InterPro"/>
</dbReference>
<dbReference type="GO" id="GO:0005524">
    <property type="term" value="F:ATP binding"/>
    <property type="evidence" value="ECO:0007669"/>
    <property type="project" value="UniProtKB-UniRule"/>
</dbReference>
<dbReference type="GO" id="GO:0004822">
    <property type="term" value="F:isoleucine-tRNA ligase activity"/>
    <property type="evidence" value="ECO:0007669"/>
    <property type="project" value="UniProtKB-UniRule"/>
</dbReference>
<dbReference type="GO" id="GO:0000049">
    <property type="term" value="F:tRNA binding"/>
    <property type="evidence" value="ECO:0007669"/>
    <property type="project" value="InterPro"/>
</dbReference>
<dbReference type="GO" id="GO:0008270">
    <property type="term" value="F:zinc ion binding"/>
    <property type="evidence" value="ECO:0007669"/>
    <property type="project" value="UniProtKB-UniRule"/>
</dbReference>
<dbReference type="GO" id="GO:0006428">
    <property type="term" value="P:isoleucyl-tRNA aminoacylation"/>
    <property type="evidence" value="ECO:0007669"/>
    <property type="project" value="UniProtKB-UniRule"/>
</dbReference>
<dbReference type="CDD" id="cd07960">
    <property type="entry name" value="Anticodon_Ia_Ile_BEm"/>
    <property type="match status" value="1"/>
</dbReference>
<dbReference type="CDD" id="cd00818">
    <property type="entry name" value="IleRS_core"/>
    <property type="match status" value="1"/>
</dbReference>
<dbReference type="FunFam" id="1.10.730.20:FF:000001">
    <property type="entry name" value="Isoleucine--tRNA ligase"/>
    <property type="match status" value="1"/>
</dbReference>
<dbReference type="FunFam" id="3.40.50.620:FF:000042">
    <property type="entry name" value="Isoleucine--tRNA ligase"/>
    <property type="match status" value="1"/>
</dbReference>
<dbReference type="FunFam" id="3.40.50.620:FF:000048">
    <property type="entry name" value="Isoleucine--tRNA ligase"/>
    <property type="match status" value="1"/>
</dbReference>
<dbReference type="FunFam" id="3.90.740.10:FF:000002">
    <property type="entry name" value="Isoleucine--tRNA ligase"/>
    <property type="match status" value="1"/>
</dbReference>
<dbReference type="Gene3D" id="1.10.730.20">
    <property type="match status" value="1"/>
</dbReference>
<dbReference type="Gene3D" id="3.40.50.620">
    <property type="entry name" value="HUPs"/>
    <property type="match status" value="2"/>
</dbReference>
<dbReference type="Gene3D" id="3.90.740.10">
    <property type="entry name" value="Valyl/Leucyl/Isoleucyl-tRNA synthetase, editing domain"/>
    <property type="match status" value="1"/>
</dbReference>
<dbReference type="HAMAP" id="MF_02002">
    <property type="entry name" value="Ile_tRNA_synth_type1"/>
    <property type="match status" value="1"/>
</dbReference>
<dbReference type="InterPro" id="IPR001412">
    <property type="entry name" value="aa-tRNA-synth_I_CS"/>
</dbReference>
<dbReference type="InterPro" id="IPR002300">
    <property type="entry name" value="aa-tRNA-synth_Ia"/>
</dbReference>
<dbReference type="InterPro" id="IPR033708">
    <property type="entry name" value="Anticodon_Ile_BEm"/>
</dbReference>
<dbReference type="InterPro" id="IPR002301">
    <property type="entry name" value="Ile-tRNA-ligase"/>
</dbReference>
<dbReference type="InterPro" id="IPR023585">
    <property type="entry name" value="Ile-tRNA-ligase_type1"/>
</dbReference>
<dbReference type="InterPro" id="IPR050081">
    <property type="entry name" value="Ile-tRNA_ligase"/>
</dbReference>
<dbReference type="InterPro" id="IPR013155">
    <property type="entry name" value="M/V/L/I-tRNA-synth_anticd-bd"/>
</dbReference>
<dbReference type="InterPro" id="IPR014729">
    <property type="entry name" value="Rossmann-like_a/b/a_fold"/>
</dbReference>
<dbReference type="InterPro" id="IPR009080">
    <property type="entry name" value="tRNAsynth_Ia_anticodon-bd"/>
</dbReference>
<dbReference type="InterPro" id="IPR009008">
    <property type="entry name" value="Val/Leu/Ile-tRNA-synth_edit"/>
</dbReference>
<dbReference type="InterPro" id="IPR010663">
    <property type="entry name" value="Znf_FPG/IleRS"/>
</dbReference>
<dbReference type="NCBIfam" id="TIGR00392">
    <property type="entry name" value="ileS"/>
    <property type="match status" value="1"/>
</dbReference>
<dbReference type="PANTHER" id="PTHR42765:SF1">
    <property type="entry name" value="ISOLEUCINE--TRNA LIGASE, MITOCHONDRIAL"/>
    <property type="match status" value="1"/>
</dbReference>
<dbReference type="PANTHER" id="PTHR42765">
    <property type="entry name" value="SOLEUCYL-TRNA SYNTHETASE"/>
    <property type="match status" value="1"/>
</dbReference>
<dbReference type="Pfam" id="PF08264">
    <property type="entry name" value="Anticodon_1"/>
    <property type="match status" value="1"/>
</dbReference>
<dbReference type="Pfam" id="PF00133">
    <property type="entry name" value="tRNA-synt_1"/>
    <property type="match status" value="1"/>
</dbReference>
<dbReference type="Pfam" id="PF06827">
    <property type="entry name" value="zf-FPG_IleRS"/>
    <property type="match status" value="1"/>
</dbReference>
<dbReference type="PRINTS" id="PR00984">
    <property type="entry name" value="TRNASYNTHILE"/>
</dbReference>
<dbReference type="SUPFAM" id="SSF47323">
    <property type="entry name" value="Anticodon-binding domain of a subclass of class I aminoacyl-tRNA synthetases"/>
    <property type="match status" value="1"/>
</dbReference>
<dbReference type="SUPFAM" id="SSF52374">
    <property type="entry name" value="Nucleotidylyl transferase"/>
    <property type="match status" value="1"/>
</dbReference>
<dbReference type="SUPFAM" id="SSF50677">
    <property type="entry name" value="ValRS/IleRS/LeuRS editing domain"/>
    <property type="match status" value="1"/>
</dbReference>
<dbReference type="PROSITE" id="PS00178">
    <property type="entry name" value="AA_TRNA_LIGASE_I"/>
    <property type="match status" value="1"/>
</dbReference>
<organism>
    <name type="scientific">Yersinia pseudotuberculosis serotype IB (strain PB1/+)</name>
    <dbReference type="NCBI Taxonomy" id="502801"/>
    <lineage>
        <taxon>Bacteria</taxon>
        <taxon>Pseudomonadati</taxon>
        <taxon>Pseudomonadota</taxon>
        <taxon>Gammaproteobacteria</taxon>
        <taxon>Enterobacterales</taxon>
        <taxon>Yersiniaceae</taxon>
        <taxon>Yersinia</taxon>
    </lineage>
</organism>
<name>SYI_YERPB</name>
<protein>
    <recommendedName>
        <fullName evidence="1">Isoleucine--tRNA ligase</fullName>
        <ecNumber evidence="1">6.1.1.5</ecNumber>
    </recommendedName>
    <alternativeName>
        <fullName evidence="1">Isoleucyl-tRNA synthetase</fullName>
        <shortName evidence="1">IleRS</shortName>
    </alternativeName>
</protein>
<evidence type="ECO:0000255" key="1">
    <source>
        <dbReference type="HAMAP-Rule" id="MF_02002"/>
    </source>
</evidence>
<proteinExistence type="inferred from homology"/>
<gene>
    <name evidence="1" type="primary">ileS</name>
    <name type="ordered locus">YPTS_0641</name>
</gene>
<comment type="function">
    <text evidence="1">Catalyzes the attachment of isoleucine to tRNA(Ile). As IleRS can inadvertently accommodate and process structurally similar amino acids such as valine, to avoid such errors it has two additional distinct tRNA(Ile)-dependent editing activities. One activity is designated as 'pretransfer' editing and involves the hydrolysis of activated Val-AMP. The other activity is designated 'posttransfer' editing and involves deacylation of mischarged Val-tRNA(Ile).</text>
</comment>
<comment type="catalytic activity">
    <reaction evidence="1">
        <text>tRNA(Ile) + L-isoleucine + ATP = L-isoleucyl-tRNA(Ile) + AMP + diphosphate</text>
        <dbReference type="Rhea" id="RHEA:11060"/>
        <dbReference type="Rhea" id="RHEA-COMP:9666"/>
        <dbReference type="Rhea" id="RHEA-COMP:9695"/>
        <dbReference type="ChEBI" id="CHEBI:30616"/>
        <dbReference type="ChEBI" id="CHEBI:33019"/>
        <dbReference type="ChEBI" id="CHEBI:58045"/>
        <dbReference type="ChEBI" id="CHEBI:78442"/>
        <dbReference type="ChEBI" id="CHEBI:78528"/>
        <dbReference type="ChEBI" id="CHEBI:456215"/>
        <dbReference type="EC" id="6.1.1.5"/>
    </reaction>
</comment>
<comment type="cofactor">
    <cofactor evidence="1">
        <name>Zn(2+)</name>
        <dbReference type="ChEBI" id="CHEBI:29105"/>
    </cofactor>
    <text evidence="1">Binds 1 zinc ion per subunit.</text>
</comment>
<comment type="subunit">
    <text evidence="1">Monomer.</text>
</comment>
<comment type="subcellular location">
    <subcellularLocation>
        <location evidence="1">Cytoplasm</location>
    </subcellularLocation>
</comment>
<comment type="domain">
    <text evidence="1">IleRS has two distinct active sites: one for aminoacylation and one for editing. The misactivated valine is translocated from the active site to the editing site, which sterically excludes the correctly activated isoleucine. The single editing site contains two valyl binding pockets, one specific for each substrate (Val-AMP or Val-tRNA(Ile)).</text>
</comment>
<comment type="similarity">
    <text evidence="1">Belongs to the class-I aminoacyl-tRNA synthetase family. IleS type 1 subfamily.</text>
</comment>
<keyword id="KW-0030">Aminoacyl-tRNA synthetase</keyword>
<keyword id="KW-0067">ATP-binding</keyword>
<keyword id="KW-0963">Cytoplasm</keyword>
<keyword id="KW-0436">Ligase</keyword>
<keyword id="KW-0479">Metal-binding</keyword>
<keyword id="KW-0547">Nucleotide-binding</keyword>
<keyword id="KW-0648">Protein biosynthesis</keyword>
<keyword id="KW-0862">Zinc</keyword>
<reference key="1">
    <citation type="submission" date="2008-04" db="EMBL/GenBank/DDBJ databases">
        <title>Complete sequence of Yersinia pseudotuberculosis PB1/+.</title>
        <authorList>
            <person name="Copeland A."/>
            <person name="Lucas S."/>
            <person name="Lapidus A."/>
            <person name="Glavina del Rio T."/>
            <person name="Dalin E."/>
            <person name="Tice H."/>
            <person name="Bruce D."/>
            <person name="Goodwin L."/>
            <person name="Pitluck S."/>
            <person name="Munk A.C."/>
            <person name="Brettin T."/>
            <person name="Detter J.C."/>
            <person name="Han C."/>
            <person name="Tapia R."/>
            <person name="Schmutz J."/>
            <person name="Larimer F."/>
            <person name="Land M."/>
            <person name="Hauser L."/>
            <person name="Challacombe J.F."/>
            <person name="Green L."/>
            <person name="Lindler L.E."/>
            <person name="Nikolich M.P."/>
            <person name="Richardson P."/>
        </authorList>
    </citation>
    <scope>NUCLEOTIDE SEQUENCE [LARGE SCALE GENOMIC DNA]</scope>
    <source>
        <strain>PB1/+</strain>
    </source>
</reference>
<accession>B2K3M6</accession>
<sequence length="938" mass="104690">MSDYKNTLNLPETGFPMRGDLAKREPDMLKRWYEQDLYGIIRAAKKGKKTFILHDGPPYANGNIHIGHSVNKILKDIIVKSKGMAGYDSPYIPGWDCHGLPIELKVEQLIGKPGEKVSAAEFRTACRKYAAEQVEGQKKDFIRLGVLGDWDHPYLTMDFKTEANIIRALSKIIDNGHLHKGAKPVHWCTDCGSSLAEAEVEYYDKTSQSIDVRFNAVDTATVAAKFGVSAVNGPISLVIWTTTPWTLPANRAISLNAEYLYQLVQVEGECLILAADLVESVMKRAGITQWAVLGSCTGSDLELLRFTHPFMGFDVPAILGDHVTLDAGTGAVHTAPGHGPDDFVIGQKYGLEVANPVGPNGCYLAGTYPTLDGLFVFKANDVVVELLREKGALLHVEKLLHSYPCCWRHKTPIIFRATPQWFISMDQKGLRKQSLQEIKGVQWIPDWGQARIETMVANRPDWCISRQRTWGVPMSLFVHKETEQLHPRSIELMEEVAKRVEQDGIQAWWDLDPAEILGADAADYVKVPDTLDVWFDSGSTHSSVVDVRPEFGGHSPDMYLEGSDQHRGWFMSSLMIATAMKGKAPYRQVLTHGFTVDGQGRKMSKSIGNTISPQDVMNKLGGDILRLWVASTDYTGEIAVSDEILKRSADSYRRIRNTARFLLANLNGFDPAQHQVKPEEMVVVDRWAVGRAQAAQAEIMEAYENYDFHLVVQRLMQFCSVEMGSFYLDIIKDRQYTAKGDGIARRSCQTALFHIAEALVRWMAPIMSFTADEIWNHLPGERQQYVFTEEWYDGLFGLAGNESMNDTFWAELLKVRGEVNKVLEQARSDKRIGGSLEAAVTLYAEPELAARLNSLQDELRFVLLTSAAKVAAYADAGNDAQQSELIAGLKITFNKADGEKCPRCWHYTQDVGLVAEHAELCGRCVTNVAGDGEERKFA</sequence>
<feature type="chain" id="PRO_1000189219" description="Isoleucine--tRNA ligase">
    <location>
        <begin position="1"/>
        <end position="938"/>
    </location>
</feature>
<feature type="short sequence motif" description="'HIGH' region">
    <location>
        <begin position="58"/>
        <end position="68"/>
    </location>
</feature>
<feature type="short sequence motif" description="'KMSKS' region">
    <location>
        <begin position="602"/>
        <end position="606"/>
    </location>
</feature>
<feature type="binding site" evidence="1">
    <location>
        <position position="561"/>
    </location>
    <ligand>
        <name>L-isoleucyl-5'-AMP</name>
        <dbReference type="ChEBI" id="CHEBI:178002"/>
    </ligand>
</feature>
<feature type="binding site" evidence="1">
    <location>
        <position position="605"/>
    </location>
    <ligand>
        <name>ATP</name>
        <dbReference type="ChEBI" id="CHEBI:30616"/>
    </ligand>
</feature>
<feature type="binding site" evidence="1">
    <location>
        <position position="901"/>
    </location>
    <ligand>
        <name>Zn(2+)</name>
        <dbReference type="ChEBI" id="CHEBI:29105"/>
    </ligand>
</feature>
<feature type="binding site" evidence="1">
    <location>
        <position position="904"/>
    </location>
    <ligand>
        <name>Zn(2+)</name>
        <dbReference type="ChEBI" id="CHEBI:29105"/>
    </ligand>
</feature>
<feature type="binding site" evidence="1">
    <location>
        <position position="921"/>
    </location>
    <ligand>
        <name>Zn(2+)</name>
        <dbReference type="ChEBI" id="CHEBI:29105"/>
    </ligand>
</feature>
<feature type="binding site" evidence="1">
    <location>
        <position position="924"/>
    </location>
    <ligand>
        <name>Zn(2+)</name>
        <dbReference type="ChEBI" id="CHEBI:29105"/>
    </ligand>
</feature>